<sequence>MTDKIKEYIAEAKAFSTQNKEKLEEFRIKFLGSKGLVKDIFAEFKNVPNDQKKEFGQVINLLKTIAEEKVKTITEELESKEEIKSLYGDLSRPSEHIKIGSRHPISLIKNQIIDIFSNIGFNVSEGPEIEDDWHNFTALNLPEYHPARDMQDTFFIQTNPDILLRTHTSSVQVRYMENNKPPIRTISPGRVFRNEAVSSRSHCIFHQVEGLYIDKDVSFADMKQTLLYFTKEMFGKSKIRLRPSYFPFTEPSAEIDIYWGLKTETDYRITKGTGWLEIGGCGMVDPNVLKNCGIEPDQFNGFAFGMGIERIAMLIYQIGDIRMFYENDIRFLEQFKSTI</sequence>
<dbReference type="EC" id="6.1.1.20" evidence="1"/>
<dbReference type="EMBL" id="AM398681">
    <property type="protein sequence ID" value="CAL42242.1"/>
    <property type="molecule type" value="Genomic_DNA"/>
</dbReference>
<dbReference type="RefSeq" id="WP_011962303.1">
    <property type="nucleotide sequence ID" value="NC_009613.3"/>
</dbReference>
<dbReference type="RefSeq" id="YP_001295062.1">
    <property type="nucleotide sequence ID" value="NC_009613.3"/>
</dbReference>
<dbReference type="SMR" id="A6GVW9"/>
<dbReference type="STRING" id="402612.FP0124"/>
<dbReference type="EnsemblBacteria" id="CAL42242">
    <property type="protein sequence ID" value="CAL42242"/>
    <property type="gene ID" value="FP0124"/>
</dbReference>
<dbReference type="GeneID" id="66553751"/>
<dbReference type="KEGG" id="fps:FP0124"/>
<dbReference type="PATRIC" id="fig|402612.5.peg.126"/>
<dbReference type="eggNOG" id="COG0016">
    <property type="taxonomic scope" value="Bacteria"/>
</dbReference>
<dbReference type="HOGENOM" id="CLU_025086_0_1_10"/>
<dbReference type="OrthoDB" id="9800719at2"/>
<dbReference type="Proteomes" id="UP000006394">
    <property type="component" value="Chromosome"/>
</dbReference>
<dbReference type="GO" id="GO:0005737">
    <property type="term" value="C:cytoplasm"/>
    <property type="evidence" value="ECO:0007669"/>
    <property type="project" value="UniProtKB-SubCell"/>
</dbReference>
<dbReference type="GO" id="GO:0005524">
    <property type="term" value="F:ATP binding"/>
    <property type="evidence" value="ECO:0007669"/>
    <property type="project" value="UniProtKB-UniRule"/>
</dbReference>
<dbReference type="GO" id="GO:0000287">
    <property type="term" value="F:magnesium ion binding"/>
    <property type="evidence" value="ECO:0007669"/>
    <property type="project" value="UniProtKB-UniRule"/>
</dbReference>
<dbReference type="GO" id="GO:0004826">
    <property type="term" value="F:phenylalanine-tRNA ligase activity"/>
    <property type="evidence" value="ECO:0007669"/>
    <property type="project" value="UniProtKB-UniRule"/>
</dbReference>
<dbReference type="GO" id="GO:0000049">
    <property type="term" value="F:tRNA binding"/>
    <property type="evidence" value="ECO:0007669"/>
    <property type="project" value="InterPro"/>
</dbReference>
<dbReference type="GO" id="GO:0006432">
    <property type="term" value="P:phenylalanyl-tRNA aminoacylation"/>
    <property type="evidence" value="ECO:0007669"/>
    <property type="project" value="UniProtKB-UniRule"/>
</dbReference>
<dbReference type="CDD" id="cd00496">
    <property type="entry name" value="PheRS_alpha_core"/>
    <property type="match status" value="1"/>
</dbReference>
<dbReference type="Gene3D" id="3.30.930.10">
    <property type="entry name" value="Bira Bifunctional Protein, Domain 2"/>
    <property type="match status" value="1"/>
</dbReference>
<dbReference type="HAMAP" id="MF_00281">
    <property type="entry name" value="Phe_tRNA_synth_alpha1"/>
    <property type="match status" value="1"/>
</dbReference>
<dbReference type="InterPro" id="IPR006195">
    <property type="entry name" value="aa-tRNA-synth_II"/>
</dbReference>
<dbReference type="InterPro" id="IPR045864">
    <property type="entry name" value="aa-tRNA-synth_II/BPL/LPL"/>
</dbReference>
<dbReference type="InterPro" id="IPR004529">
    <property type="entry name" value="Phe-tRNA-synth_IIc_asu"/>
</dbReference>
<dbReference type="InterPro" id="IPR004188">
    <property type="entry name" value="Phe-tRNA_ligase_II_N"/>
</dbReference>
<dbReference type="InterPro" id="IPR022911">
    <property type="entry name" value="Phe_tRNA_ligase_alpha1_bac"/>
</dbReference>
<dbReference type="InterPro" id="IPR002319">
    <property type="entry name" value="Phenylalanyl-tRNA_Synthase"/>
</dbReference>
<dbReference type="InterPro" id="IPR010978">
    <property type="entry name" value="tRNA-bd_arm"/>
</dbReference>
<dbReference type="NCBIfam" id="TIGR00468">
    <property type="entry name" value="pheS"/>
    <property type="match status" value="1"/>
</dbReference>
<dbReference type="PANTHER" id="PTHR11538:SF41">
    <property type="entry name" value="PHENYLALANINE--TRNA LIGASE, MITOCHONDRIAL"/>
    <property type="match status" value="1"/>
</dbReference>
<dbReference type="PANTHER" id="PTHR11538">
    <property type="entry name" value="PHENYLALANYL-TRNA SYNTHETASE"/>
    <property type="match status" value="1"/>
</dbReference>
<dbReference type="Pfam" id="PF02912">
    <property type="entry name" value="Phe_tRNA-synt_N"/>
    <property type="match status" value="1"/>
</dbReference>
<dbReference type="Pfam" id="PF01409">
    <property type="entry name" value="tRNA-synt_2d"/>
    <property type="match status" value="1"/>
</dbReference>
<dbReference type="SUPFAM" id="SSF55681">
    <property type="entry name" value="Class II aaRS and biotin synthetases"/>
    <property type="match status" value="1"/>
</dbReference>
<dbReference type="SUPFAM" id="SSF46589">
    <property type="entry name" value="tRNA-binding arm"/>
    <property type="match status" value="1"/>
</dbReference>
<dbReference type="PROSITE" id="PS50862">
    <property type="entry name" value="AA_TRNA_LIGASE_II"/>
    <property type="match status" value="1"/>
</dbReference>
<organism>
    <name type="scientific">Flavobacterium psychrophilum (strain ATCC 49511 / DSM 21280 / CIP 103535 / JIP02/86)</name>
    <dbReference type="NCBI Taxonomy" id="402612"/>
    <lineage>
        <taxon>Bacteria</taxon>
        <taxon>Pseudomonadati</taxon>
        <taxon>Bacteroidota</taxon>
        <taxon>Flavobacteriia</taxon>
        <taxon>Flavobacteriales</taxon>
        <taxon>Flavobacteriaceae</taxon>
        <taxon>Flavobacterium</taxon>
    </lineage>
</organism>
<gene>
    <name evidence="1" type="primary">pheS</name>
    <name type="ordered locus">FP0124</name>
</gene>
<protein>
    <recommendedName>
        <fullName evidence="1">Phenylalanine--tRNA ligase alpha subunit</fullName>
        <ecNumber evidence="1">6.1.1.20</ecNumber>
    </recommendedName>
    <alternativeName>
        <fullName evidence="1">Phenylalanyl-tRNA synthetase alpha subunit</fullName>
        <shortName evidence="1">PheRS</shortName>
    </alternativeName>
</protein>
<comment type="catalytic activity">
    <reaction evidence="1">
        <text>tRNA(Phe) + L-phenylalanine + ATP = L-phenylalanyl-tRNA(Phe) + AMP + diphosphate + H(+)</text>
        <dbReference type="Rhea" id="RHEA:19413"/>
        <dbReference type="Rhea" id="RHEA-COMP:9668"/>
        <dbReference type="Rhea" id="RHEA-COMP:9699"/>
        <dbReference type="ChEBI" id="CHEBI:15378"/>
        <dbReference type="ChEBI" id="CHEBI:30616"/>
        <dbReference type="ChEBI" id="CHEBI:33019"/>
        <dbReference type="ChEBI" id="CHEBI:58095"/>
        <dbReference type="ChEBI" id="CHEBI:78442"/>
        <dbReference type="ChEBI" id="CHEBI:78531"/>
        <dbReference type="ChEBI" id="CHEBI:456215"/>
        <dbReference type="EC" id="6.1.1.20"/>
    </reaction>
</comment>
<comment type="cofactor">
    <cofactor evidence="1">
        <name>Mg(2+)</name>
        <dbReference type="ChEBI" id="CHEBI:18420"/>
    </cofactor>
    <text evidence="1">Binds 2 magnesium ions per tetramer.</text>
</comment>
<comment type="subunit">
    <text evidence="1">Tetramer of two alpha and two beta subunits.</text>
</comment>
<comment type="subcellular location">
    <subcellularLocation>
        <location evidence="1">Cytoplasm</location>
    </subcellularLocation>
</comment>
<comment type="similarity">
    <text evidence="1">Belongs to the class-II aminoacyl-tRNA synthetase family. Phe-tRNA synthetase alpha subunit type 1 subfamily.</text>
</comment>
<feature type="chain" id="PRO_1000006829" description="Phenylalanine--tRNA ligase alpha subunit">
    <location>
        <begin position="1"/>
        <end position="339"/>
    </location>
</feature>
<feature type="binding site" evidence="1">
    <location>
        <position position="250"/>
    </location>
    <ligand>
        <name>Mg(2+)</name>
        <dbReference type="ChEBI" id="CHEBI:18420"/>
        <note>shared with beta subunit</note>
    </ligand>
</feature>
<evidence type="ECO:0000255" key="1">
    <source>
        <dbReference type="HAMAP-Rule" id="MF_00281"/>
    </source>
</evidence>
<reference key="1">
    <citation type="journal article" date="2007" name="Nat. Biotechnol.">
        <title>Complete genome sequence of the fish pathogen Flavobacterium psychrophilum.</title>
        <authorList>
            <person name="Duchaud E."/>
            <person name="Boussaha M."/>
            <person name="Loux V."/>
            <person name="Bernardet J.-F."/>
            <person name="Michel C."/>
            <person name="Kerouault B."/>
            <person name="Mondot S."/>
            <person name="Nicolas P."/>
            <person name="Bossy R."/>
            <person name="Caron C."/>
            <person name="Bessieres P."/>
            <person name="Gibrat J.-F."/>
            <person name="Claverol S."/>
            <person name="Dumetz F."/>
            <person name="Le Henaff M."/>
            <person name="Benmansour A."/>
        </authorList>
    </citation>
    <scope>NUCLEOTIDE SEQUENCE [LARGE SCALE GENOMIC DNA]</scope>
    <source>
        <strain>ATCC 49511 / DSM 21280 / CIP 103535 / JIP02/86</strain>
    </source>
</reference>
<keyword id="KW-0030">Aminoacyl-tRNA synthetase</keyword>
<keyword id="KW-0067">ATP-binding</keyword>
<keyword id="KW-0963">Cytoplasm</keyword>
<keyword id="KW-0436">Ligase</keyword>
<keyword id="KW-0460">Magnesium</keyword>
<keyword id="KW-0479">Metal-binding</keyword>
<keyword id="KW-0547">Nucleotide-binding</keyword>
<keyword id="KW-0648">Protein biosynthesis</keyword>
<keyword id="KW-1185">Reference proteome</keyword>
<name>SYFA_FLAPJ</name>
<proteinExistence type="inferred from homology"/>
<accession>A6GVW9</accession>